<protein>
    <recommendedName>
        <fullName>Phosphoribosyl-ATP pyrophosphatase</fullName>
        <shortName>PRA-PH</shortName>
        <ecNumber>3.6.1.31</ecNumber>
    </recommendedName>
</protein>
<name>HIS2_AGRFC</name>
<feature type="chain" id="PRO_0000136340" description="Phosphoribosyl-ATP pyrophosphatase">
    <location>
        <begin position="1"/>
        <end position="107"/>
    </location>
</feature>
<reference key="1">
    <citation type="journal article" date="2001" name="Science">
        <title>The genome of the natural genetic engineer Agrobacterium tumefaciens C58.</title>
        <authorList>
            <person name="Wood D.W."/>
            <person name="Setubal J.C."/>
            <person name="Kaul R."/>
            <person name="Monks D.E."/>
            <person name="Kitajima J.P."/>
            <person name="Okura V.K."/>
            <person name="Zhou Y."/>
            <person name="Chen L."/>
            <person name="Wood G.E."/>
            <person name="Almeida N.F. Jr."/>
            <person name="Woo L."/>
            <person name="Chen Y."/>
            <person name="Paulsen I.T."/>
            <person name="Eisen J.A."/>
            <person name="Karp P.D."/>
            <person name="Bovee D. Sr."/>
            <person name="Chapman P."/>
            <person name="Clendenning J."/>
            <person name="Deatherage G."/>
            <person name="Gillet W."/>
            <person name="Grant C."/>
            <person name="Kutyavin T."/>
            <person name="Levy R."/>
            <person name="Li M.-J."/>
            <person name="McClelland E."/>
            <person name="Palmieri A."/>
            <person name="Raymond C."/>
            <person name="Rouse G."/>
            <person name="Saenphimmachak C."/>
            <person name="Wu Z."/>
            <person name="Romero P."/>
            <person name="Gordon D."/>
            <person name="Zhang S."/>
            <person name="Yoo H."/>
            <person name="Tao Y."/>
            <person name="Biddle P."/>
            <person name="Jung M."/>
            <person name="Krespan W."/>
            <person name="Perry M."/>
            <person name="Gordon-Kamm B."/>
            <person name="Liao L."/>
            <person name="Kim S."/>
            <person name="Hendrick C."/>
            <person name="Zhao Z.-Y."/>
            <person name="Dolan M."/>
            <person name="Chumley F."/>
            <person name="Tingey S.V."/>
            <person name="Tomb J.-F."/>
            <person name="Gordon M.P."/>
            <person name="Olson M.V."/>
            <person name="Nester E.W."/>
        </authorList>
    </citation>
    <scope>NUCLEOTIDE SEQUENCE [LARGE SCALE GENOMIC DNA]</scope>
    <source>
        <strain>C58 / ATCC 33970</strain>
    </source>
</reference>
<reference key="2">
    <citation type="journal article" date="2001" name="Science">
        <title>Genome sequence of the plant pathogen and biotechnology agent Agrobacterium tumefaciens C58.</title>
        <authorList>
            <person name="Goodner B."/>
            <person name="Hinkle G."/>
            <person name="Gattung S."/>
            <person name="Miller N."/>
            <person name="Blanchard M."/>
            <person name="Qurollo B."/>
            <person name="Goldman B.S."/>
            <person name="Cao Y."/>
            <person name="Askenazi M."/>
            <person name="Halling C."/>
            <person name="Mullin L."/>
            <person name="Houmiel K."/>
            <person name="Gordon J."/>
            <person name="Vaudin M."/>
            <person name="Iartchouk O."/>
            <person name="Epp A."/>
            <person name="Liu F."/>
            <person name="Wollam C."/>
            <person name="Allinger M."/>
            <person name="Doughty D."/>
            <person name="Scott C."/>
            <person name="Lappas C."/>
            <person name="Markelz B."/>
            <person name="Flanagan C."/>
            <person name="Crowell C."/>
            <person name="Gurson J."/>
            <person name="Lomo C."/>
            <person name="Sear C."/>
            <person name="Strub G."/>
            <person name="Cielo C."/>
            <person name="Slater S."/>
        </authorList>
    </citation>
    <scope>NUCLEOTIDE SEQUENCE [LARGE SCALE GENOMIC DNA]</scope>
    <source>
        <strain>C58 / ATCC 33970</strain>
    </source>
</reference>
<comment type="catalytic activity">
    <reaction>
        <text>1-(5-phospho-beta-D-ribosyl)-ATP + H2O = 1-(5-phospho-beta-D-ribosyl)-5'-AMP + diphosphate + H(+)</text>
        <dbReference type="Rhea" id="RHEA:22828"/>
        <dbReference type="ChEBI" id="CHEBI:15377"/>
        <dbReference type="ChEBI" id="CHEBI:15378"/>
        <dbReference type="ChEBI" id="CHEBI:33019"/>
        <dbReference type="ChEBI" id="CHEBI:59457"/>
        <dbReference type="ChEBI" id="CHEBI:73183"/>
        <dbReference type="EC" id="3.6.1.31"/>
    </reaction>
</comment>
<comment type="pathway">
    <text>Amino-acid biosynthesis; L-histidine biosynthesis; L-histidine from 5-phospho-alpha-D-ribose 1-diphosphate: step 2/9.</text>
</comment>
<comment type="subcellular location">
    <subcellularLocation>
        <location evidence="1">Cytoplasm</location>
    </subcellularLocation>
</comment>
<comment type="similarity">
    <text evidence="2">Belongs to the PRA-PH family.</text>
</comment>
<accession>Q8UJ91</accession>
<gene>
    <name type="primary">hisE</name>
    <name type="ordered locus">Atu0038</name>
    <name type="ORF">AGR_C_60</name>
</gene>
<dbReference type="EC" id="3.6.1.31"/>
<dbReference type="EMBL" id="AE007869">
    <property type="protein sequence ID" value="AAK85862.2"/>
    <property type="molecule type" value="Genomic_DNA"/>
</dbReference>
<dbReference type="PIR" id="AG2581">
    <property type="entry name" value="AG2581"/>
</dbReference>
<dbReference type="PIR" id="E97363">
    <property type="entry name" value="E97363"/>
</dbReference>
<dbReference type="RefSeq" id="NP_353077.2">
    <property type="nucleotide sequence ID" value="NC_003062.2"/>
</dbReference>
<dbReference type="RefSeq" id="WP_006311110.1">
    <property type="nucleotide sequence ID" value="NC_003062.2"/>
</dbReference>
<dbReference type="SMR" id="Q8UJ91"/>
<dbReference type="STRING" id="176299.Atu0038"/>
<dbReference type="EnsemblBacteria" id="AAK85862">
    <property type="protein sequence ID" value="AAK85862"/>
    <property type="gene ID" value="Atu0038"/>
</dbReference>
<dbReference type="GeneID" id="1132076"/>
<dbReference type="KEGG" id="atu:Atu0038"/>
<dbReference type="PATRIC" id="fig|176299.10.peg.38"/>
<dbReference type="eggNOG" id="COG0140">
    <property type="taxonomic scope" value="Bacteria"/>
</dbReference>
<dbReference type="HOGENOM" id="CLU_123337_1_1_5"/>
<dbReference type="OrthoDB" id="9814738at2"/>
<dbReference type="PhylomeDB" id="Q8UJ91"/>
<dbReference type="BioCyc" id="AGRO:ATU0038-MONOMER"/>
<dbReference type="UniPathway" id="UPA00031">
    <property type="reaction ID" value="UER00007"/>
</dbReference>
<dbReference type="Proteomes" id="UP000000813">
    <property type="component" value="Chromosome circular"/>
</dbReference>
<dbReference type="GO" id="GO:0005737">
    <property type="term" value="C:cytoplasm"/>
    <property type="evidence" value="ECO:0007669"/>
    <property type="project" value="UniProtKB-SubCell"/>
</dbReference>
<dbReference type="GO" id="GO:0005524">
    <property type="term" value="F:ATP binding"/>
    <property type="evidence" value="ECO:0007669"/>
    <property type="project" value="UniProtKB-KW"/>
</dbReference>
<dbReference type="GO" id="GO:0004636">
    <property type="term" value="F:phosphoribosyl-ATP diphosphatase activity"/>
    <property type="evidence" value="ECO:0007669"/>
    <property type="project" value="UniProtKB-UniRule"/>
</dbReference>
<dbReference type="GO" id="GO:0000105">
    <property type="term" value="P:L-histidine biosynthetic process"/>
    <property type="evidence" value="ECO:0007669"/>
    <property type="project" value="UniProtKB-UniRule"/>
</dbReference>
<dbReference type="CDD" id="cd11534">
    <property type="entry name" value="NTP-PPase_HisIE_like"/>
    <property type="match status" value="1"/>
</dbReference>
<dbReference type="Gene3D" id="1.10.287.1080">
    <property type="entry name" value="MazG-like"/>
    <property type="match status" value="1"/>
</dbReference>
<dbReference type="HAMAP" id="MF_01020">
    <property type="entry name" value="HisE"/>
    <property type="match status" value="1"/>
</dbReference>
<dbReference type="InterPro" id="IPR008179">
    <property type="entry name" value="HisE"/>
</dbReference>
<dbReference type="InterPro" id="IPR021130">
    <property type="entry name" value="PRib-ATP_PPHydrolase-like"/>
</dbReference>
<dbReference type="NCBIfam" id="TIGR03188">
    <property type="entry name" value="histidine_hisI"/>
    <property type="match status" value="1"/>
</dbReference>
<dbReference type="NCBIfam" id="NF001613">
    <property type="entry name" value="PRK00400.1-5"/>
    <property type="match status" value="1"/>
</dbReference>
<dbReference type="PANTHER" id="PTHR42945">
    <property type="entry name" value="HISTIDINE BIOSYNTHESIS BIFUNCTIONAL PROTEIN"/>
    <property type="match status" value="1"/>
</dbReference>
<dbReference type="PANTHER" id="PTHR42945:SF1">
    <property type="entry name" value="HISTIDINE BIOSYNTHESIS BIFUNCTIONAL PROTEIN HIS7"/>
    <property type="match status" value="1"/>
</dbReference>
<dbReference type="Pfam" id="PF01503">
    <property type="entry name" value="PRA-PH"/>
    <property type="match status" value="1"/>
</dbReference>
<dbReference type="SUPFAM" id="SSF101386">
    <property type="entry name" value="all-alpha NTP pyrophosphatases"/>
    <property type="match status" value="1"/>
</dbReference>
<proteinExistence type="inferred from homology"/>
<sequence>MSAFSLSDLERIVAKRAAASPDESWTAKLVAAGQERAAKKLGEEAVEAVIAAIAQDRDGLKNEAADLLYHLLVVLKIADIPLSDVFAELERRTGQTGLAEKAARPTP</sequence>
<keyword id="KW-0028">Amino-acid biosynthesis</keyword>
<keyword id="KW-0067">ATP-binding</keyword>
<keyword id="KW-0963">Cytoplasm</keyword>
<keyword id="KW-0368">Histidine biosynthesis</keyword>
<keyword id="KW-0378">Hydrolase</keyword>
<keyword id="KW-0547">Nucleotide-binding</keyword>
<keyword id="KW-1185">Reference proteome</keyword>
<evidence type="ECO:0000250" key="1"/>
<evidence type="ECO:0000305" key="2"/>
<organism>
    <name type="scientific">Agrobacterium fabrum (strain C58 / ATCC 33970)</name>
    <name type="common">Agrobacterium tumefaciens (strain C58)</name>
    <dbReference type="NCBI Taxonomy" id="176299"/>
    <lineage>
        <taxon>Bacteria</taxon>
        <taxon>Pseudomonadati</taxon>
        <taxon>Pseudomonadota</taxon>
        <taxon>Alphaproteobacteria</taxon>
        <taxon>Hyphomicrobiales</taxon>
        <taxon>Rhizobiaceae</taxon>
        <taxon>Rhizobium/Agrobacterium group</taxon>
        <taxon>Agrobacterium</taxon>
        <taxon>Agrobacterium tumefaciens complex</taxon>
    </lineage>
</organism>